<keyword id="KW-0068">Autocatalytic cleavage</keyword>
<keyword id="KW-1003">Cell membrane</keyword>
<keyword id="KW-0217">Developmental protein</keyword>
<keyword id="KW-0378">Hydrolase</keyword>
<keyword id="KW-0472">Membrane</keyword>
<keyword id="KW-0645">Protease</keyword>
<keyword id="KW-1185">Reference proteome</keyword>
<keyword id="KW-0964">Secreted</keyword>
<keyword id="KW-0732">Signal</keyword>
<comment type="function">
    <text evidence="2">Intercellular signal essential for a variety of patterning events during development.</text>
</comment>
<comment type="subcellular location">
    <molecule>Warthog protein 8</molecule>
    <subcellularLocation>
        <location evidence="1">Secreted</location>
    </subcellularLocation>
    <subcellularLocation>
        <location evidence="1">Cell surface</location>
    </subcellularLocation>
    <text evidence="1">Also secreted in either cleaved or uncleaved form to mediate signaling to other cells.</text>
</comment>
<comment type="subcellular location">
    <molecule>Warthog protein 8 N-product</molecule>
    <subcellularLocation>
        <location evidence="1">Cell membrane</location>
        <topology evidence="1">Peripheral membrane protein</topology>
        <orientation evidence="1">Extracellular side</orientation>
    </subcellularLocation>
</comment>
<comment type="subcellular location">
    <molecule>Warthog protein 8 C-product</molecule>
    <subcellularLocation>
        <location evidence="1">Secreted</location>
        <location evidence="1">Extracellular space</location>
    </subcellularLocation>
    <text evidence="1">Also secreted in either cleaved or uncleaved form to mediate signaling to other cells.</text>
</comment>
<comment type="PTM">
    <text evidence="4">The C-terminal domain displays an autoproteolysis activity.</text>
</comment>
<comment type="similarity">
    <text evidence="5">Belongs to the hedgehog family.</text>
</comment>
<accession>Q94130</accession>
<accession>O45273</accession>
<dbReference type="EMBL" id="U61237">
    <property type="protein sequence ID" value="AAB17542.1"/>
    <property type="molecule type" value="mRNA"/>
</dbReference>
<dbReference type="EMBL" id="Z81043">
    <property type="protein sequence ID" value="CAB02804.2"/>
    <property type="molecule type" value="Genomic_DNA"/>
</dbReference>
<dbReference type="EMBL" id="AL023813">
    <property type="protein sequence ID" value="CAB02804.2"/>
    <property type="status" value="JOINED"/>
    <property type="molecule type" value="Genomic_DNA"/>
</dbReference>
<dbReference type="PIR" id="T19563">
    <property type="entry name" value="T19563"/>
</dbReference>
<dbReference type="RefSeq" id="NP_506805.1">
    <property type="nucleotide sequence ID" value="NM_074404.6"/>
</dbReference>
<dbReference type="SMR" id="Q94130"/>
<dbReference type="BioGRID" id="45030">
    <property type="interactions" value="1"/>
</dbReference>
<dbReference type="FunCoup" id="Q94130">
    <property type="interactions" value="8"/>
</dbReference>
<dbReference type="STRING" id="6239.C29F3.2.1"/>
<dbReference type="MEROPS" id="C46.008"/>
<dbReference type="PaxDb" id="6239-C29F3.2"/>
<dbReference type="EnsemblMetazoa" id="C29F3.2.1">
    <property type="protein sequence ID" value="C29F3.2.1"/>
    <property type="gene ID" value="WBGene00006954"/>
</dbReference>
<dbReference type="GeneID" id="180035"/>
<dbReference type="KEGG" id="cel:CELE_C29F3.2"/>
<dbReference type="UCSC" id="C29F3.2">
    <property type="organism name" value="c. elegans"/>
</dbReference>
<dbReference type="AGR" id="WB:WBGene00006954"/>
<dbReference type="CTD" id="180035"/>
<dbReference type="WormBase" id="C29F3.2">
    <property type="protein sequence ID" value="CE29200"/>
    <property type="gene ID" value="WBGene00006954"/>
    <property type="gene designation" value="wrt-8"/>
</dbReference>
<dbReference type="eggNOG" id="KOG3638">
    <property type="taxonomic scope" value="Eukaryota"/>
</dbReference>
<dbReference type="GeneTree" id="ENSGT00970000196193"/>
<dbReference type="HOGENOM" id="CLU_034413_0_0_1"/>
<dbReference type="InParanoid" id="Q94130"/>
<dbReference type="OMA" id="RCGESTI"/>
<dbReference type="OrthoDB" id="5212at2759"/>
<dbReference type="PhylomeDB" id="Q94130"/>
<dbReference type="PRO" id="PR:Q94130"/>
<dbReference type="Proteomes" id="UP000001940">
    <property type="component" value="Chromosome V"/>
</dbReference>
<dbReference type="Bgee" id="WBGene00006954">
    <property type="expression patterns" value="Expressed in embryo and 2 other cell types or tissues"/>
</dbReference>
<dbReference type="GO" id="GO:0009986">
    <property type="term" value="C:cell surface"/>
    <property type="evidence" value="ECO:0007669"/>
    <property type="project" value="UniProtKB-SubCell"/>
</dbReference>
<dbReference type="GO" id="GO:0031012">
    <property type="term" value="C:extracellular matrix"/>
    <property type="evidence" value="ECO:0000318"/>
    <property type="project" value="GO_Central"/>
</dbReference>
<dbReference type="GO" id="GO:0005576">
    <property type="term" value="C:extracellular region"/>
    <property type="evidence" value="ECO:0000303"/>
    <property type="project" value="UniProtKB"/>
</dbReference>
<dbReference type="GO" id="GO:0005886">
    <property type="term" value="C:plasma membrane"/>
    <property type="evidence" value="ECO:0000303"/>
    <property type="project" value="UniProtKB"/>
</dbReference>
<dbReference type="GO" id="GO:0008233">
    <property type="term" value="F:peptidase activity"/>
    <property type="evidence" value="ECO:0007669"/>
    <property type="project" value="UniProtKB-KW"/>
</dbReference>
<dbReference type="GO" id="GO:0007267">
    <property type="term" value="P:cell-cell signaling"/>
    <property type="evidence" value="ECO:0000303"/>
    <property type="project" value="UniProtKB"/>
</dbReference>
<dbReference type="GO" id="GO:0016539">
    <property type="term" value="P:intein-mediated protein splicing"/>
    <property type="evidence" value="ECO:0007669"/>
    <property type="project" value="InterPro"/>
</dbReference>
<dbReference type="GO" id="GO:0016540">
    <property type="term" value="P:protein autoprocessing"/>
    <property type="evidence" value="ECO:0000303"/>
    <property type="project" value="UniProtKB"/>
</dbReference>
<dbReference type="GO" id="GO:0007367">
    <property type="term" value="P:segment polarity determination"/>
    <property type="evidence" value="ECO:0000303"/>
    <property type="project" value="UniProtKB"/>
</dbReference>
<dbReference type="GO" id="GO:0048731">
    <property type="term" value="P:system development"/>
    <property type="evidence" value="ECO:0007669"/>
    <property type="project" value="UniProtKB-ARBA"/>
</dbReference>
<dbReference type="CDD" id="cd00081">
    <property type="entry name" value="Hint"/>
    <property type="match status" value="1"/>
</dbReference>
<dbReference type="Gene3D" id="2.170.16.10">
    <property type="entry name" value="Hedgehog/Intein (Hint) domain"/>
    <property type="match status" value="1"/>
</dbReference>
<dbReference type="InterPro" id="IPR052140">
    <property type="entry name" value="Dev_Signal_Hedgehog-like"/>
</dbReference>
<dbReference type="InterPro" id="IPR001657">
    <property type="entry name" value="Hedgehog"/>
</dbReference>
<dbReference type="InterPro" id="IPR001767">
    <property type="entry name" value="Hedgehog_Hint"/>
</dbReference>
<dbReference type="InterPro" id="IPR003586">
    <property type="entry name" value="Hint_dom_C"/>
</dbReference>
<dbReference type="InterPro" id="IPR003587">
    <property type="entry name" value="Hint_dom_N"/>
</dbReference>
<dbReference type="InterPro" id="IPR036844">
    <property type="entry name" value="Hint_dom_sf"/>
</dbReference>
<dbReference type="InterPro" id="IPR006141">
    <property type="entry name" value="Intein_N"/>
</dbReference>
<dbReference type="PANTHER" id="PTHR46706">
    <property type="entry name" value="PROTEIN QUA-1-RELATED"/>
    <property type="match status" value="1"/>
</dbReference>
<dbReference type="PANTHER" id="PTHR46706:SF12">
    <property type="entry name" value="PROTEIN QUA-1-RELATED"/>
    <property type="match status" value="1"/>
</dbReference>
<dbReference type="Pfam" id="PF01079">
    <property type="entry name" value="Hint"/>
    <property type="match status" value="1"/>
</dbReference>
<dbReference type="PRINTS" id="PR00632">
    <property type="entry name" value="SONICHHOG"/>
</dbReference>
<dbReference type="SMART" id="SM00305">
    <property type="entry name" value="HintC"/>
    <property type="match status" value="1"/>
</dbReference>
<dbReference type="SMART" id="SM00306">
    <property type="entry name" value="HintN"/>
    <property type="match status" value="1"/>
</dbReference>
<dbReference type="SUPFAM" id="SSF51294">
    <property type="entry name" value="Hedgehog/intein (Hint) domain"/>
    <property type="match status" value="1"/>
</dbReference>
<dbReference type="PROSITE" id="PS50817">
    <property type="entry name" value="INTEIN_N_TER"/>
    <property type="match status" value="1"/>
</dbReference>
<organism>
    <name type="scientific">Caenorhabditis elegans</name>
    <dbReference type="NCBI Taxonomy" id="6239"/>
    <lineage>
        <taxon>Eukaryota</taxon>
        <taxon>Metazoa</taxon>
        <taxon>Ecdysozoa</taxon>
        <taxon>Nematoda</taxon>
        <taxon>Chromadorea</taxon>
        <taxon>Rhabditida</taxon>
        <taxon>Rhabditina</taxon>
        <taxon>Rhabditomorpha</taxon>
        <taxon>Rhabditoidea</taxon>
        <taxon>Rhabditidae</taxon>
        <taxon>Peloderinae</taxon>
        <taxon>Caenorhabditis</taxon>
    </lineage>
</organism>
<feature type="signal peptide" evidence="3">
    <location>
        <begin position="1"/>
        <end position="19"/>
    </location>
</feature>
<feature type="chain" id="PRO_0000013265" description="Warthog protein 8">
    <location>
        <begin position="20"/>
        <end position="550"/>
    </location>
</feature>
<feature type="chain" id="PRO_0000013266" description="Warthog protein 8 N-product" evidence="1">
    <location>
        <begin position="20"/>
        <end position="342"/>
    </location>
</feature>
<feature type="chain" id="PRO_0000013267" description="Warthog protein 8 C-product" evidence="1">
    <location>
        <begin position="343"/>
        <end position="548"/>
    </location>
</feature>
<feature type="site" description="Cleavage; by autolysis" evidence="1">
    <location>
        <begin position="342"/>
        <end position="343"/>
    </location>
</feature>
<feature type="site" description="Involved in auto-cleavage" evidence="1">
    <location>
        <position position="409"/>
    </location>
</feature>
<feature type="site" description="Essential for auto-cleavage" evidence="1">
    <location>
        <position position="412"/>
    </location>
</feature>
<feature type="sequence conflict" description="In Ref. 1; AAB17542." evidence="5" ref="1">
    <original>S</original>
    <variation>T</variation>
    <location>
        <position position="433"/>
    </location>
</feature>
<proteinExistence type="evidence at transcript level"/>
<protein>
    <recommendedName>
        <fullName>Warthog protein 8</fullName>
    </recommendedName>
    <alternativeName>
        <fullName>Protein M89</fullName>
    </alternativeName>
    <component>
        <recommendedName>
            <fullName>Warthog protein 8 N-product</fullName>
        </recommendedName>
    </component>
    <component>
        <recommendedName>
            <fullName>Warthog protein 8 C-product</fullName>
        </recommendedName>
    </component>
</protein>
<sequence>MNYLLLVSGLLSVWQPVFGSRCGESTIPFSLEILPSGHPVLGCARPTCFGWHPKGYQLPTTAKFSRLNRKLDGFLRDDSLFTYPFETDSSKIYKVQNSTCEPGFQSSKCDSKDQWVGGIEPETDAFQDVAYQCCTYAPLRESTDRNIATVSAGEIVIGGEVYQNESQYAFDYISNIEKSMDENGEVYYEVNIRRFACLDPHNADRRIDEVWSSENTIRKVNGQKPIAQQAPNVAVNAPIEAGTFDGEVVDGQTVVIEEIIAQQGFIVENETTVAPFAGPFQAQGFQPRFGAPQGFQPAFQQPPPQQFFPQNFQPVVQQPVQFPAQPVGYAPYAPAGWQLHYCFPADAEVNVYEKGVKRMDELEVGDWVQALHGKETTYSPVKYWLHRDPEQEAEFVEFLLENGESFTLTEKHLVFATDCQQNVKNLDDLNPTSTGKINIGECFFMAQPENASKFQKVQILDIQRVRKTGIYAPMTSLGHLLVNQIHTSCHSEIDHHLLQNSFFKHVLKLKNRISKYFWNEESNTEGNIGTSLNFLIEIFELIVPSKMISY</sequence>
<name>WRT8_CAEEL</name>
<reference evidence="5" key="1">
    <citation type="journal article" date="1996" name="Cell">
        <title>Hedgehog patterning activity: role of a lipophilic modification mediated by the carboxy-terminal autoprocessing domain.</title>
        <authorList>
            <person name="Porter J.A."/>
            <person name="Ekker S.C."/>
            <person name="Park W.-J."/>
            <person name="von Kessler D.P."/>
            <person name="Young K.E."/>
            <person name="Chen C.-H."/>
            <person name="Ma Y."/>
            <person name="Woods A.S."/>
            <person name="Cotter R.J."/>
            <person name="Koonin E.V."/>
            <person name="Beachy P.A."/>
        </authorList>
    </citation>
    <scope>NUCLEOTIDE SEQUENCE [MRNA]</scope>
    <source>
        <strain>Bristol N2</strain>
    </source>
</reference>
<reference key="2">
    <citation type="journal article" date="1998" name="Science">
        <title>Genome sequence of the nematode C. elegans: a platform for investigating biology.</title>
        <authorList>
            <consortium name="The C. elegans sequencing consortium"/>
        </authorList>
    </citation>
    <scope>NUCLEOTIDE SEQUENCE [LARGE SCALE GENOMIC DNA]</scope>
    <source>
        <strain>Bristol N2</strain>
    </source>
</reference>
<gene>
    <name type="primary">wrt-8</name>
    <name type="ORF">C29F3.2</name>
</gene>
<evidence type="ECO:0000250" key="1"/>
<evidence type="ECO:0000250" key="2">
    <source>
        <dbReference type="UniProtKB" id="Q02936"/>
    </source>
</evidence>
<evidence type="ECO:0000255" key="3"/>
<evidence type="ECO:0000269" key="4">
    <source>
    </source>
</evidence>
<evidence type="ECO:0000305" key="5"/>